<name>SUCC_BAUCH</name>
<comment type="function">
    <text evidence="1">Succinyl-CoA synthetase functions in the citric acid cycle (TCA), coupling the hydrolysis of succinyl-CoA to the synthesis of either ATP or GTP and thus represents the only step of substrate-level phosphorylation in the TCA. The beta subunit provides nucleotide specificity of the enzyme and binds the substrate succinate, while the binding sites for coenzyme A and phosphate are found in the alpha subunit.</text>
</comment>
<comment type="catalytic activity">
    <reaction evidence="1">
        <text>succinate + ATP + CoA = succinyl-CoA + ADP + phosphate</text>
        <dbReference type="Rhea" id="RHEA:17661"/>
        <dbReference type="ChEBI" id="CHEBI:30031"/>
        <dbReference type="ChEBI" id="CHEBI:30616"/>
        <dbReference type="ChEBI" id="CHEBI:43474"/>
        <dbReference type="ChEBI" id="CHEBI:57287"/>
        <dbReference type="ChEBI" id="CHEBI:57292"/>
        <dbReference type="ChEBI" id="CHEBI:456216"/>
        <dbReference type="EC" id="6.2.1.5"/>
    </reaction>
    <physiologicalReaction direction="right-to-left" evidence="1">
        <dbReference type="Rhea" id="RHEA:17663"/>
    </physiologicalReaction>
</comment>
<comment type="catalytic activity">
    <reaction evidence="1">
        <text>GTP + succinate + CoA = succinyl-CoA + GDP + phosphate</text>
        <dbReference type="Rhea" id="RHEA:22120"/>
        <dbReference type="ChEBI" id="CHEBI:30031"/>
        <dbReference type="ChEBI" id="CHEBI:37565"/>
        <dbReference type="ChEBI" id="CHEBI:43474"/>
        <dbReference type="ChEBI" id="CHEBI:57287"/>
        <dbReference type="ChEBI" id="CHEBI:57292"/>
        <dbReference type="ChEBI" id="CHEBI:58189"/>
    </reaction>
    <physiologicalReaction direction="right-to-left" evidence="1">
        <dbReference type="Rhea" id="RHEA:22122"/>
    </physiologicalReaction>
</comment>
<comment type="cofactor">
    <cofactor evidence="1">
        <name>Mg(2+)</name>
        <dbReference type="ChEBI" id="CHEBI:18420"/>
    </cofactor>
    <text evidence="1">Binds 1 Mg(2+) ion per subunit.</text>
</comment>
<comment type="pathway">
    <text evidence="1">Carbohydrate metabolism; tricarboxylic acid cycle; succinate from succinyl-CoA (ligase route): step 1/1.</text>
</comment>
<comment type="subunit">
    <text evidence="1">Heterotetramer of two alpha and two beta subunits.</text>
</comment>
<comment type="similarity">
    <text evidence="1">Belongs to the succinate/malate CoA ligase beta subunit family.</text>
</comment>
<dbReference type="EC" id="6.2.1.5" evidence="1"/>
<dbReference type="EMBL" id="CP000238">
    <property type="protein sequence ID" value="ABF14132.1"/>
    <property type="molecule type" value="Genomic_DNA"/>
</dbReference>
<dbReference type="RefSeq" id="WP_011520303.1">
    <property type="nucleotide sequence ID" value="NC_007984.1"/>
</dbReference>
<dbReference type="SMR" id="Q1LTZ4"/>
<dbReference type="STRING" id="374463.BCI_0097"/>
<dbReference type="KEGG" id="bci:BCI_0097"/>
<dbReference type="HOGENOM" id="CLU_037430_0_2_6"/>
<dbReference type="OrthoDB" id="9802602at2"/>
<dbReference type="UniPathway" id="UPA00223">
    <property type="reaction ID" value="UER00999"/>
</dbReference>
<dbReference type="Proteomes" id="UP000002427">
    <property type="component" value="Chromosome"/>
</dbReference>
<dbReference type="GO" id="GO:0005829">
    <property type="term" value="C:cytosol"/>
    <property type="evidence" value="ECO:0007669"/>
    <property type="project" value="TreeGrafter"/>
</dbReference>
<dbReference type="GO" id="GO:0042709">
    <property type="term" value="C:succinate-CoA ligase complex"/>
    <property type="evidence" value="ECO:0007669"/>
    <property type="project" value="TreeGrafter"/>
</dbReference>
<dbReference type="GO" id="GO:0005524">
    <property type="term" value="F:ATP binding"/>
    <property type="evidence" value="ECO:0007669"/>
    <property type="project" value="UniProtKB-UniRule"/>
</dbReference>
<dbReference type="GO" id="GO:0000287">
    <property type="term" value="F:magnesium ion binding"/>
    <property type="evidence" value="ECO:0007669"/>
    <property type="project" value="UniProtKB-UniRule"/>
</dbReference>
<dbReference type="GO" id="GO:0004775">
    <property type="term" value="F:succinate-CoA ligase (ADP-forming) activity"/>
    <property type="evidence" value="ECO:0007669"/>
    <property type="project" value="UniProtKB-UniRule"/>
</dbReference>
<dbReference type="GO" id="GO:0004776">
    <property type="term" value="F:succinate-CoA ligase (GDP-forming) activity"/>
    <property type="evidence" value="ECO:0007669"/>
    <property type="project" value="RHEA"/>
</dbReference>
<dbReference type="GO" id="GO:0006104">
    <property type="term" value="P:succinyl-CoA metabolic process"/>
    <property type="evidence" value="ECO:0007669"/>
    <property type="project" value="TreeGrafter"/>
</dbReference>
<dbReference type="GO" id="GO:0006099">
    <property type="term" value="P:tricarboxylic acid cycle"/>
    <property type="evidence" value="ECO:0007669"/>
    <property type="project" value="UniProtKB-UniRule"/>
</dbReference>
<dbReference type="FunFam" id="3.30.1490.20:FF:000002">
    <property type="entry name" value="Succinate--CoA ligase [ADP-forming] subunit beta"/>
    <property type="match status" value="1"/>
</dbReference>
<dbReference type="FunFam" id="3.30.470.20:FF:000002">
    <property type="entry name" value="Succinate--CoA ligase [ADP-forming] subunit beta"/>
    <property type="match status" value="1"/>
</dbReference>
<dbReference type="FunFam" id="3.40.50.261:FF:000001">
    <property type="entry name" value="Succinate--CoA ligase [ADP-forming] subunit beta"/>
    <property type="match status" value="1"/>
</dbReference>
<dbReference type="Gene3D" id="3.30.1490.20">
    <property type="entry name" value="ATP-grasp fold, A domain"/>
    <property type="match status" value="1"/>
</dbReference>
<dbReference type="Gene3D" id="3.30.470.20">
    <property type="entry name" value="ATP-grasp fold, B domain"/>
    <property type="match status" value="1"/>
</dbReference>
<dbReference type="Gene3D" id="3.40.50.261">
    <property type="entry name" value="Succinyl-CoA synthetase domains"/>
    <property type="match status" value="1"/>
</dbReference>
<dbReference type="HAMAP" id="MF_00558">
    <property type="entry name" value="Succ_CoA_beta"/>
    <property type="match status" value="1"/>
</dbReference>
<dbReference type="InterPro" id="IPR011761">
    <property type="entry name" value="ATP-grasp"/>
</dbReference>
<dbReference type="InterPro" id="IPR013650">
    <property type="entry name" value="ATP-grasp_succ-CoA_synth-type"/>
</dbReference>
<dbReference type="InterPro" id="IPR013815">
    <property type="entry name" value="ATP_grasp_subdomain_1"/>
</dbReference>
<dbReference type="InterPro" id="IPR017866">
    <property type="entry name" value="Succ-CoA_synthase_bsu_CS"/>
</dbReference>
<dbReference type="InterPro" id="IPR005811">
    <property type="entry name" value="SUCC_ACL_C"/>
</dbReference>
<dbReference type="InterPro" id="IPR005809">
    <property type="entry name" value="Succ_CoA_ligase-like_bsu"/>
</dbReference>
<dbReference type="InterPro" id="IPR016102">
    <property type="entry name" value="Succinyl-CoA_synth-like"/>
</dbReference>
<dbReference type="NCBIfam" id="NF001913">
    <property type="entry name" value="PRK00696.1"/>
    <property type="match status" value="1"/>
</dbReference>
<dbReference type="NCBIfam" id="TIGR01016">
    <property type="entry name" value="sucCoAbeta"/>
    <property type="match status" value="1"/>
</dbReference>
<dbReference type="PANTHER" id="PTHR11815:SF10">
    <property type="entry name" value="SUCCINATE--COA LIGASE [GDP-FORMING] SUBUNIT BETA, MITOCHONDRIAL"/>
    <property type="match status" value="1"/>
</dbReference>
<dbReference type="PANTHER" id="PTHR11815">
    <property type="entry name" value="SUCCINYL-COA SYNTHETASE BETA CHAIN"/>
    <property type="match status" value="1"/>
</dbReference>
<dbReference type="Pfam" id="PF08442">
    <property type="entry name" value="ATP-grasp_2"/>
    <property type="match status" value="1"/>
</dbReference>
<dbReference type="Pfam" id="PF00549">
    <property type="entry name" value="Ligase_CoA"/>
    <property type="match status" value="1"/>
</dbReference>
<dbReference type="PIRSF" id="PIRSF001554">
    <property type="entry name" value="SucCS_beta"/>
    <property type="match status" value="1"/>
</dbReference>
<dbReference type="SUPFAM" id="SSF56059">
    <property type="entry name" value="Glutathione synthetase ATP-binding domain-like"/>
    <property type="match status" value="1"/>
</dbReference>
<dbReference type="SUPFAM" id="SSF52210">
    <property type="entry name" value="Succinyl-CoA synthetase domains"/>
    <property type="match status" value="1"/>
</dbReference>
<dbReference type="PROSITE" id="PS50975">
    <property type="entry name" value="ATP_GRASP"/>
    <property type="match status" value="1"/>
</dbReference>
<dbReference type="PROSITE" id="PS01217">
    <property type="entry name" value="SUCCINYL_COA_LIG_3"/>
    <property type="match status" value="1"/>
</dbReference>
<gene>
    <name evidence="1" type="primary">sucC</name>
    <name type="ordered locus">BCI_0097</name>
</gene>
<accession>Q1LTZ4</accession>
<feature type="chain" id="PRO_1000082022" description="Succinate--CoA ligase [ADP-forming] subunit beta">
    <location>
        <begin position="1"/>
        <end position="393"/>
    </location>
</feature>
<feature type="domain" description="ATP-grasp" evidence="1">
    <location>
        <begin position="9"/>
        <end position="245"/>
    </location>
</feature>
<feature type="binding site" evidence="1">
    <location>
        <position position="46"/>
    </location>
    <ligand>
        <name>ATP</name>
        <dbReference type="ChEBI" id="CHEBI:30616"/>
    </ligand>
</feature>
<feature type="binding site" evidence="1">
    <location>
        <begin position="53"/>
        <end position="55"/>
    </location>
    <ligand>
        <name>ATP</name>
        <dbReference type="ChEBI" id="CHEBI:30616"/>
    </ligand>
</feature>
<feature type="binding site" evidence="1">
    <location>
        <position position="99"/>
    </location>
    <ligand>
        <name>ATP</name>
        <dbReference type="ChEBI" id="CHEBI:30616"/>
    </ligand>
</feature>
<feature type="binding site" evidence="1">
    <location>
        <position position="102"/>
    </location>
    <ligand>
        <name>ATP</name>
        <dbReference type="ChEBI" id="CHEBI:30616"/>
    </ligand>
</feature>
<feature type="binding site" evidence="1">
    <location>
        <position position="107"/>
    </location>
    <ligand>
        <name>ATP</name>
        <dbReference type="ChEBI" id="CHEBI:30616"/>
    </ligand>
</feature>
<feature type="binding site" evidence="1">
    <location>
        <position position="200"/>
    </location>
    <ligand>
        <name>Mg(2+)</name>
        <dbReference type="ChEBI" id="CHEBI:18420"/>
    </ligand>
</feature>
<feature type="binding site" evidence="1">
    <location>
        <position position="214"/>
    </location>
    <ligand>
        <name>Mg(2+)</name>
        <dbReference type="ChEBI" id="CHEBI:18420"/>
    </ligand>
</feature>
<feature type="binding site" evidence="1">
    <location>
        <position position="265"/>
    </location>
    <ligand>
        <name>substrate</name>
        <note>ligand shared with subunit alpha</note>
    </ligand>
</feature>
<feature type="binding site" evidence="1">
    <location>
        <begin position="322"/>
        <end position="324"/>
    </location>
    <ligand>
        <name>substrate</name>
        <note>ligand shared with subunit alpha</note>
    </ligand>
</feature>
<sequence>MKLHEYQAKMLFAQYGIPIPKGLVCTTPNEAKESIAVIGYGPWIVKCQVHAGGRGKSGGVRIVRSKEEIQEFAKQWFGKHLITEQTNHIGQPVSKILVEAAIDIAQELYLGCLVDRSNQCIKFIASIQGGIDIENIAKEKPHLLHQIILDPLIGPQLYQSRDLAFKIGLSSKKQINQFNKIFMGLATLFLEKDLVMAEINPLVITRLGDLICLDGKLHVDSNALFRQPELCKMLDPSQEDKCETYAKQHNLNYIALNGNIGCLVNGAGLAMSTIDMVKFYGGEPANFLDVGGRVTQEKVTKAFQIILSDKKVKVILVNIFGGIVCCDVIAKGIINARLESGINIPVIVRLEGNNAKQGIQHLVNSILNIRIATNLTTAAKQAVALVEGKQCLF</sequence>
<keyword id="KW-0067">ATP-binding</keyword>
<keyword id="KW-0436">Ligase</keyword>
<keyword id="KW-0460">Magnesium</keyword>
<keyword id="KW-0479">Metal-binding</keyword>
<keyword id="KW-0547">Nucleotide-binding</keyword>
<keyword id="KW-1185">Reference proteome</keyword>
<keyword id="KW-0816">Tricarboxylic acid cycle</keyword>
<protein>
    <recommendedName>
        <fullName evidence="1">Succinate--CoA ligase [ADP-forming] subunit beta</fullName>
        <ecNumber evidence="1">6.2.1.5</ecNumber>
    </recommendedName>
    <alternativeName>
        <fullName evidence="1">Succinyl-CoA synthetase subunit beta</fullName>
        <shortName evidence="1">SCS-beta</shortName>
    </alternativeName>
</protein>
<organism>
    <name type="scientific">Baumannia cicadellinicola subsp. Homalodisca coagulata</name>
    <dbReference type="NCBI Taxonomy" id="374463"/>
    <lineage>
        <taxon>Bacteria</taxon>
        <taxon>Pseudomonadati</taxon>
        <taxon>Pseudomonadota</taxon>
        <taxon>Gammaproteobacteria</taxon>
        <taxon>Candidatus Palibaumannia</taxon>
    </lineage>
</organism>
<proteinExistence type="inferred from homology"/>
<evidence type="ECO:0000255" key="1">
    <source>
        <dbReference type="HAMAP-Rule" id="MF_00558"/>
    </source>
</evidence>
<reference key="1">
    <citation type="journal article" date="2006" name="PLoS Biol.">
        <title>Metabolic complementarity and genomics of the dual bacterial symbiosis of sharpshooters.</title>
        <authorList>
            <person name="Wu D."/>
            <person name="Daugherty S.C."/>
            <person name="Van Aken S.E."/>
            <person name="Pai G.H."/>
            <person name="Watkins K.L."/>
            <person name="Khouri H."/>
            <person name="Tallon L.J."/>
            <person name="Zaborsky J.M."/>
            <person name="Dunbar H.E."/>
            <person name="Tran P.L."/>
            <person name="Moran N.A."/>
            <person name="Eisen J.A."/>
        </authorList>
    </citation>
    <scope>NUCLEOTIDE SEQUENCE [LARGE SCALE GENOMIC DNA]</scope>
</reference>